<sequence>MARVSREEVEHIANLSKLHISPEETTEMQDTLETILNFAQQIDTADTSSVEPTYHVLDLQNVLREDKAIPGIPQSLALKNAKETEDGQFKVPSIISGEDA</sequence>
<keyword id="KW-0067">ATP-binding</keyword>
<keyword id="KW-0436">Ligase</keyword>
<keyword id="KW-0547">Nucleotide-binding</keyword>
<keyword id="KW-0648">Protein biosynthesis</keyword>
<keyword id="KW-1185">Reference proteome</keyword>
<gene>
    <name evidence="1" type="primary">gatC</name>
    <name type="ordered locus">Sca_1473</name>
</gene>
<reference key="1">
    <citation type="journal article" date="2009" name="Appl. Environ. Microbiol.">
        <title>Genome analysis of the meat starter culture bacterium Staphylococcus carnosus TM300.</title>
        <authorList>
            <person name="Rosenstein R."/>
            <person name="Nerz C."/>
            <person name="Biswas L."/>
            <person name="Resch A."/>
            <person name="Raddatz G."/>
            <person name="Schuster S.C."/>
            <person name="Goetz F."/>
        </authorList>
    </citation>
    <scope>NUCLEOTIDE SEQUENCE [LARGE SCALE GENOMIC DNA]</scope>
    <source>
        <strain>TM300</strain>
    </source>
</reference>
<evidence type="ECO:0000255" key="1">
    <source>
        <dbReference type="HAMAP-Rule" id="MF_00122"/>
    </source>
</evidence>
<organism>
    <name type="scientific">Staphylococcus carnosus (strain TM300)</name>
    <dbReference type="NCBI Taxonomy" id="396513"/>
    <lineage>
        <taxon>Bacteria</taxon>
        <taxon>Bacillati</taxon>
        <taxon>Bacillota</taxon>
        <taxon>Bacilli</taxon>
        <taxon>Bacillales</taxon>
        <taxon>Staphylococcaceae</taxon>
        <taxon>Staphylococcus</taxon>
    </lineage>
</organism>
<accession>B9DMT9</accession>
<proteinExistence type="inferred from homology"/>
<dbReference type="EC" id="6.3.5.-" evidence="1"/>
<dbReference type="EMBL" id="AM295250">
    <property type="protein sequence ID" value="CAL28378.1"/>
    <property type="molecule type" value="Genomic_DNA"/>
</dbReference>
<dbReference type="RefSeq" id="WP_015900718.1">
    <property type="nucleotide sequence ID" value="NC_012121.1"/>
</dbReference>
<dbReference type="SMR" id="B9DMT9"/>
<dbReference type="GeneID" id="93793928"/>
<dbReference type="KEGG" id="sca:SCA_1473"/>
<dbReference type="eggNOG" id="COG0721">
    <property type="taxonomic scope" value="Bacteria"/>
</dbReference>
<dbReference type="HOGENOM" id="CLU_105899_1_2_9"/>
<dbReference type="OrthoDB" id="9813938at2"/>
<dbReference type="BioCyc" id="SCAR396513:SCA_RS07490-MONOMER"/>
<dbReference type="Proteomes" id="UP000000444">
    <property type="component" value="Chromosome"/>
</dbReference>
<dbReference type="GO" id="GO:0050566">
    <property type="term" value="F:asparaginyl-tRNA synthase (glutamine-hydrolyzing) activity"/>
    <property type="evidence" value="ECO:0007669"/>
    <property type="project" value="RHEA"/>
</dbReference>
<dbReference type="GO" id="GO:0005524">
    <property type="term" value="F:ATP binding"/>
    <property type="evidence" value="ECO:0007669"/>
    <property type="project" value="UniProtKB-KW"/>
</dbReference>
<dbReference type="GO" id="GO:0050567">
    <property type="term" value="F:glutaminyl-tRNA synthase (glutamine-hydrolyzing) activity"/>
    <property type="evidence" value="ECO:0007669"/>
    <property type="project" value="UniProtKB-UniRule"/>
</dbReference>
<dbReference type="GO" id="GO:0070681">
    <property type="term" value="P:glutaminyl-tRNAGln biosynthesis via transamidation"/>
    <property type="evidence" value="ECO:0007669"/>
    <property type="project" value="TreeGrafter"/>
</dbReference>
<dbReference type="GO" id="GO:0006450">
    <property type="term" value="P:regulation of translational fidelity"/>
    <property type="evidence" value="ECO:0007669"/>
    <property type="project" value="InterPro"/>
</dbReference>
<dbReference type="GO" id="GO:0006412">
    <property type="term" value="P:translation"/>
    <property type="evidence" value="ECO:0007669"/>
    <property type="project" value="UniProtKB-UniRule"/>
</dbReference>
<dbReference type="Gene3D" id="1.10.20.60">
    <property type="entry name" value="Glu-tRNAGln amidotransferase C subunit, N-terminal domain"/>
    <property type="match status" value="1"/>
</dbReference>
<dbReference type="HAMAP" id="MF_00122">
    <property type="entry name" value="GatC"/>
    <property type="match status" value="1"/>
</dbReference>
<dbReference type="InterPro" id="IPR036113">
    <property type="entry name" value="Asp/Glu-ADT_sf_sub_c"/>
</dbReference>
<dbReference type="InterPro" id="IPR003837">
    <property type="entry name" value="GatC"/>
</dbReference>
<dbReference type="NCBIfam" id="TIGR00135">
    <property type="entry name" value="gatC"/>
    <property type="match status" value="1"/>
</dbReference>
<dbReference type="PANTHER" id="PTHR15004">
    <property type="entry name" value="GLUTAMYL-TRNA(GLN) AMIDOTRANSFERASE SUBUNIT C, MITOCHONDRIAL"/>
    <property type="match status" value="1"/>
</dbReference>
<dbReference type="PANTHER" id="PTHR15004:SF0">
    <property type="entry name" value="GLUTAMYL-TRNA(GLN) AMIDOTRANSFERASE SUBUNIT C, MITOCHONDRIAL"/>
    <property type="match status" value="1"/>
</dbReference>
<dbReference type="Pfam" id="PF02686">
    <property type="entry name" value="GatC"/>
    <property type="match status" value="1"/>
</dbReference>
<dbReference type="SUPFAM" id="SSF141000">
    <property type="entry name" value="Glu-tRNAGln amidotransferase C subunit"/>
    <property type="match status" value="1"/>
</dbReference>
<name>GATC_STACT</name>
<protein>
    <recommendedName>
        <fullName evidence="1">Aspartyl/glutamyl-tRNA(Asn/Gln) amidotransferase subunit C</fullName>
        <shortName evidence="1">Asp/Glu-ADT subunit C</shortName>
        <ecNumber evidence="1">6.3.5.-</ecNumber>
    </recommendedName>
</protein>
<comment type="function">
    <text evidence="1">Allows the formation of correctly charged Asn-tRNA(Asn) or Gln-tRNA(Gln) through the transamidation of misacylated Asp-tRNA(Asn) or Glu-tRNA(Gln) in organisms which lack either or both of asparaginyl-tRNA or glutaminyl-tRNA synthetases. The reaction takes place in the presence of glutamine and ATP through an activated phospho-Asp-tRNA(Asn) or phospho-Glu-tRNA(Gln).</text>
</comment>
<comment type="catalytic activity">
    <reaction evidence="1">
        <text>L-glutamyl-tRNA(Gln) + L-glutamine + ATP + H2O = L-glutaminyl-tRNA(Gln) + L-glutamate + ADP + phosphate + H(+)</text>
        <dbReference type="Rhea" id="RHEA:17521"/>
        <dbReference type="Rhea" id="RHEA-COMP:9681"/>
        <dbReference type="Rhea" id="RHEA-COMP:9684"/>
        <dbReference type="ChEBI" id="CHEBI:15377"/>
        <dbReference type="ChEBI" id="CHEBI:15378"/>
        <dbReference type="ChEBI" id="CHEBI:29985"/>
        <dbReference type="ChEBI" id="CHEBI:30616"/>
        <dbReference type="ChEBI" id="CHEBI:43474"/>
        <dbReference type="ChEBI" id="CHEBI:58359"/>
        <dbReference type="ChEBI" id="CHEBI:78520"/>
        <dbReference type="ChEBI" id="CHEBI:78521"/>
        <dbReference type="ChEBI" id="CHEBI:456216"/>
    </reaction>
</comment>
<comment type="catalytic activity">
    <reaction evidence="1">
        <text>L-aspartyl-tRNA(Asn) + L-glutamine + ATP + H2O = L-asparaginyl-tRNA(Asn) + L-glutamate + ADP + phosphate + 2 H(+)</text>
        <dbReference type="Rhea" id="RHEA:14513"/>
        <dbReference type="Rhea" id="RHEA-COMP:9674"/>
        <dbReference type="Rhea" id="RHEA-COMP:9677"/>
        <dbReference type="ChEBI" id="CHEBI:15377"/>
        <dbReference type="ChEBI" id="CHEBI:15378"/>
        <dbReference type="ChEBI" id="CHEBI:29985"/>
        <dbReference type="ChEBI" id="CHEBI:30616"/>
        <dbReference type="ChEBI" id="CHEBI:43474"/>
        <dbReference type="ChEBI" id="CHEBI:58359"/>
        <dbReference type="ChEBI" id="CHEBI:78515"/>
        <dbReference type="ChEBI" id="CHEBI:78516"/>
        <dbReference type="ChEBI" id="CHEBI:456216"/>
    </reaction>
</comment>
<comment type="subunit">
    <text evidence="1">Heterotrimer of A, B and C subunits.</text>
</comment>
<comment type="similarity">
    <text evidence="1">Belongs to the GatC family.</text>
</comment>
<feature type="chain" id="PRO_1000122582" description="Aspartyl/glutamyl-tRNA(Asn/Gln) amidotransferase subunit C">
    <location>
        <begin position="1"/>
        <end position="100"/>
    </location>
</feature>